<feature type="chain" id="PRO_0000123253" description="Small ribosomal subunit protein uS11">
    <location>
        <begin position="1"/>
        <end position="129"/>
    </location>
</feature>
<proteinExistence type="inferred from homology"/>
<dbReference type="EMBL" id="AE003852">
    <property type="protein sequence ID" value="AAF95714.1"/>
    <property type="molecule type" value="Genomic_DNA"/>
</dbReference>
<dbReference type="PIR" id="C82061">
    <property type="entry name" value="C82061"/>
</dbReference>
<dbReference type="RefSeq" id="NP_232201.1">
    <property type="nucleotide sequence ID" value="NC_002505.1"/>
</dbReference>
<dbReference type="RefSeq" id="WP_001118870.1">
    <property type="nucleotide sequence ID" value="NZ_LT906614.1"/>
</dbReference>
<dbReference type="SMR" id="P66367"/>
<dbReference type="STRING" id="243277.VC_2573"/>
<dbReference type="DNASU" id="2615590"/>
<dbReference type="EnsemblBacteria" id="AAF95714">
    <property type="protein sequence ID" value="AAF95714"/>
    <property type="gene ID" value="VC_2573"/>
</dbReference>
<dbReference type="GeneID" id="97171204"/>
<dbReference type="KEGG" id="vch:VC_2573"/>
<dbReference type="PATRIC" id="fig|243277.26.peg.2452"/>
<dbReference type="eggNOG" id="COG0100">
    <property type="taxonomic scope" value="Bacteria"/>
</dbReference>
<dbReference type="HOGENOM" id="CLU_072439_5_0_6"/>
<dbReference type="PRO" id="PR:P66367"/>
<dbReference type="Proteomes" id="UP000000584">
    <property type="component" value="Chromosome 1"/>
</dbReference>
<dbReference type="GO" id="GO:0022627">
    <property type="term" value="C:cytosolic small ribosomal subunit"/>
    <property type="evidence" value="ECO:0000318"/>
    <property type="project" value="GO_Central"/>
</dbReference>
<dbReference type="GO" id="GO:0019843">
    <property type="term" value="F:rRNA binding"/>
    <property type="evidence" value="ECO:0007669"/>
    <property type="project" value="UniProtKB-UniRule"/>
</dbReference>
<dbReference type="GO" id="GO:0003735">
    <property type="term" value="F:structural constituent of ribosome"/>
    <property type="evidence" value="ECO:0000318"/>
    <property type="project" value="GO_Central"/>
</dbReference>
<dbReference type="GO" id="GO:0006412">
    <property type="term" value="P:translation"/>
    <property type="evidence" value="ECO:0000318"/>
    <property type="project" value="GO_Central"/>
</dbReference>
<dbReference type="FunFam" id="3.30.420.80:FF:000001">
    <property type="entry name" value="30S ribosomal protein S11"/>
    <property type="match status" value="1"/>
</dbReference>
<dbReference type="Gene3D" id="3.30.420.80">
    <property type="entry name" value="Ribosomal protein S11"/>
    <property type="match status" value="1"/>
</dbReference>
<dbReference type="HAMAP" id="MF_01310">
    <property type="entry name" value="Ribosomal_uS11"/>
    <property type="match status" value="1"/>
</dbReference>
<dbReference type="InterPro" id="IPR001971">
    <property type="entry name" value="Ribosomal_uS11"/>
</dbReference>
<dbReference type="InterPro" id="IPR019981">
    <property type="entry name" value="Ribosomal_uS11_bac-type"/>
</dbReference>
<dbReference type="InterPro" id="IPR018102">
    <property type="entry name" value="Ribosomal_uS11_CS"/>
</dbReference>
<dbReference type="InterPro" id="IPR036967">
    <property type="entry name" value="Ribosomal_uS11_sf"/>
</dbReference>
<dbReference type="NCBIfam" id="NF003698">
    <property type="entry name" value="PRK05309.1"/>
    <property type="match status" value="1"/>
</dbReference>
<dbReference type="NCBIfam" id="TIGR03632">
    <property type="entry name" value="uS11_bact"/>
    <property type="match status" value="1"/>
</dbReference>
<dbReference type="PANTHER" id="PTHR11759">
    <property type="entry name" value="40S RIBOSOMAL PROTEIN S14/30S RIBOSOMAL PROTEIN S11"/>
    <property type="match status" value="1"/>
</dbReference>
<dbReference type="Pfam" id="PF00411">
    <property type="entry name" value="Ribosomal_S11"/>
    <property type="match status" value="1"/>
</dbReference>
<dbReference type="PIRSF" id="PIRSF002131">
    <property type="entry name" value="Ribosomal_S11"/>
    <property type="match status" value="1"/>
</dbReference>
<dbReference type="SUPFAM" id="SSF53137">
    <property type="entry name" value="Translational machinery components"/>
    <property type="match status" value="1"/>
</dbReference>
<dbReference type="PROSITE" id="PS00054">
    <property type="entry name" value="RIBOSOMAL_S11"/>
    <property type="match status" value="1"/>
</dbReference>
<protein>
    <recommendedName>
        <fullName evidence="1">Small ribosomal subunit protein uS11</fullName>
    </recommendedName>
    <alternativeName>
        <fullName evidence="2">30S ribosomal protein S11</fullName>
    </alternativeName>
</protein>
<reference key="1">
    <citation type="journal article" date="2000" name="Nature">
        <title>DNA sequence of both chromosomes of the cholera pathogen Vibrio cholerae.</title>
        <authorList>
            <person name="Heidelberg J.F."/>
            <person name="Eisen J.A."/>
            <person name="Nelson W.C."/>
            <person name="Clayton R.A."/>
            <person name="Gwinn M.L."/>
            <person name="Dodson R.J."/>
            <person name="Haft D.H."/>
            <person name="Hickey E.K."/>
            <person name="Peterson J.D."/>
            <person name="Umayam L.A."/>
            <person name="Gill S.R."/>
            <person name="Nelson K.E."/>
            <person name="Read T.D."/>
            <person name="Tettelin H."/>
            <person name="Richardson D.L."/>
            <person name="Ermolaeva M.D."/>
            <person name="Vamathevan J.J."/>
            <person name="Bass S."/>
            <person name="Qin H."/>
            <person name="Dragoi I."/>
            <person name="Sellers P."/>
            <person name="McDonald L.A."/>
            <person name="Utterback T.R."/>
            <person name="Fleischmann R.D."/>
            <person name="Nierman W.C."/>
            <person name="White O."/>
            <person name="Salzberg S.L."/>
            <person name="Smith H.O."/>
            <person name="Colwell R.R."/>
            <person name="Mekalanos J.J."/>
            <person name="Venter J.C."/>
            <person name="Fraser C.M."/>
        </authorList>
    </citation>
    <scope>NUCLEOTIDE SEQUENCE [LARGE SCALE GENOMIC DNA]</scope>
    <source>
        <strain>ATCC 39315 / El Tor Inaba N16961</strain>
    </source>
</reference>
<name>RS11_VIBCH</name>
<organism>
    <name type="scientific">Vibrio cholerae serotype O1 (strain ATCC 39315 / El Tor Inaba N16961)</name>
    <dbReference type="NCBI Taxonomy" id="243277"/>
    <lineage>
        <taxon>Bacteria</taxon>
        <taxon>Pseudomonadati</taxon>
        <taxon>Pseudomonadota</taxon>
        <taxon>Gammaproteobacteria</taxon>
        <taxon>Vibrionales</taxon>
        <taxon>Vibrionaceae</taxon>
        <taxon>Vibrio</taxon>
    </lineage>
</organism>
<comment type="function">
    <text evidence="1">Located on the platform of the 30S subunit, it bridges several disparate RNA helices of the 16S rRNA. Forms part of the Shine-Dalgarno cleft in the 70S ribosome.</text>
</comment>
<comment type="subunit">
    <text evidence="1">Part of the 30S ribosomal subunit. Interacts with proteins S7 and S18. Binds to IF-3.</text>
</comment>
<comment type="similarity">
    <text evidence="1">Belongs to the universal ribosomal protein uS11 family.</text>
</comment>
<accession>P66367</accession>
<accession>Q9KP06</accession>
<sequence>MAKQPTRARKRVRKQVADGVAHIHASFNNTIVTITDRQGNALAWATAGGSGFRGSRKSTPFAAQVAAERCAEMAKEYGLKNLEVMVKGPGPGRESTVRALNAAGFRITNIVDATPIPHNGCRPPKKRRV</sequence>
<keyword id="KW-1185">Reference proteome</keyword>
<keyword id="KW-0687">Ribonucleoprotein</keyword>
<keyword id="KW-0689">Ribosomal protein</keyword>
<keyword id="KW-0694">RNA-binding</keyword>
<keyword id="KW-0699">rRNA-binding</keyword>
<gene>
    <name evidence="1" type="primary">rpsK</name>
    <name type="ordered locus">VC_2573</name>
</gene>
<evidence type="ECO:0000255" key="1">
    <source>
        <dbReference type="HAMAP-Rule" id="MF_01310"/>
    </source>
</evidence>
<evidence type="ECO:0000305" key="2"/>